<protein>
    <recommendedName>
        <fullName evidence="1">Glucose-1-phosphate adenylyltransferase 1</fullName>
        <ecNumber evidence="1">2.7.7.27</ecNumber>
    </recommendedName>
    <alternativeName>
        <fullName evidence="1">ADP-glucose pyrophosphorylase 1</fullName>
        <shortName evidence="1">ADPGlc PPase 1</shortName>
    </alternativeName>
    <alternativeName>
        <fullName evidence="1">ADP-glucose synthase 1</fullName>
    </alternativeName>
</protein>
<keyword id="KW-0067">ATP-binding</keyword>
<keyword id="KW-0119">Carbohydrate metabolism</keyword>
<keyword id="KW-0320">Glycogen biosynthesis</keyword>
<keyword id="KW-0321">Glycogen metabolism</keyword>
<keyword id="KW-0547">Nucleotide-binding</keyword>
<keyword id="KW-0548">Nucleotidyltransferase</keyword>
<keyword id="KW-1185">Reference proteome</keyword>
<keyword id="KW-0808">Transferase</keyword>
<name>GLGC1_VIBCH</name>
<comment type="function">
    <text evidence="1">Involved in the biosynthesis of ADP-glucose, a building block required for the elongation reactions to produce glycogen. Catalyzes the reaction between ATP and alpha-D-glucose 1-phosphate (G1P) to produce pyrophosphate and ADP-Glc.</text>
</comment>
<comment type="catalytic activity">
    <reaction evidence="1">
        <text>alpha-D-glucose 1-phosphate + ATP + H(+) = ADP-alpha-D-glucose + diphosphate</text>
        <dbReference type="Rhea" id="RHEA:12120"/>
        <dbReference type="ChEBI" id="CHEBI:15378"/>
        <dbReference type="ChEBI" id="CHEBI:30616"/>
        <dbReference type="ChEBI" id="CHEBI:33019"/>
        <dbReference type="ChEBI" id="CHEBI:57498"/>
        <dbReference type="ChEBI" id="CHEBI:58601"/>
        <dbReference type="EC" id="2.7.7.27"/>
    </reaction>
</comment>
<comment type="pathway">
    <text evidence="1">Glycan biosynthesis; glycogen biosynthesis.</text>
</comment>
<comment type="subunit">
    <text evidence="1">Homotetramer.</text>
</comment>
<comment type="similarity">
    <text evidence="1">Belongs to the bacterial/plant glucose-1-phosphate adenylyltransferase family.</text>
</comment>
<sequence>MAGVLGMILAGGEGSRLKPLTETRTKPAVPFGGSYRLIDFALNNFVNADLMRIYVLTQFKSQSLYIHMKKGWNLSGITDRFIDIIPAQMRDGKRWYEGTADAIYQNLRFVEIVAPDQVCIFGSDHIYKMDIRQMLDFHRRMEAELTVSALRMPISQASQFGVIEVDENGKMVGFEEKPSNPKSIPGEPEWALVSMGNYIFEAETLSKELREDAENNQSSHDFGKDIIPKMFPRGKVYVYDFTTNKIKGEKESTYWRDVGTIESYWSAHMDLLDKDPEFSLYNRSWPLHTYYPPLPPATFVDVKDKKVKITDSLISGGSYIQGSTIYKSVLGFRSNIAAGSFISESVILGDVKIGAGCTIKRAIIDKDVEIAAGTIIGEDLEMDRKRFHVSDEGIVVIAKGSKVGF</sequence>
<gene>
    <name evidence="1" type="primary">glgC1</name>
    <name type="ordered locus">VC_1727</name>
</gene>
<feature type="chain" id="PRO_0000195343" description="Glucose-1-phosphate adenylyltransferase 1">
    <location>
        <begin position="1"/>
        <end position="405"/>
    </location>
</feature>
<feature type="binding site" evidence="1">
    <location>
        <position position="96"/>
    </location>
    <ligand>
        <name>alpha-D-glucose 1-phosphate</name>
        <dbReference type="ChEBI" id="CHEBI:58601"/>
    </ligand>
</feature>
<feature type="binding site" evidence="1">
    <location>
        <position position="161"/>
    </location>
    <ligand>
        <name>alpha-D-glucose 1-phosphate</name>
        <dbReference type="ChEBI" id="CHEBI:58601"/>
    </ligand>
</feature>
<feature type="binding site" evidence="1">
    <location>
        <begin position="176"/>
        <end position="177"/>
    </location>
    <ligand>
        <name>alpha-D-glucose 1-phosphate</name>
        <dbReference type="ChEBI" id="CHEBI:58601"/>
    </ligand>
</feature>
<feature type="binding site" evidence="1">
    <location>
        <position position="194"/>
    </location>
    <ligand>
        <name>alpha-D-glucose 1-phosphate</name>
        <dbReference type="ChEBI" id="CHEBI:58601"/>
    </ligand>
</feature>
<evidence type="ECO:0000255" key="1">
    <source>
        <dbReference type="HAMAP-Rule" id="MF_00624"/>
    </source>
</evidence>
<dbReference type="EC" id="2.7.7.27" evidence="1"/>
<dbReference type="EMBL" id="AE003852">
    <property type="protein sequence ID" value="AAF94877.1"/>
    <property type="molecule type" value="Genomic_DNA"/>
</dbReference>
<dbReference type="PIR" id="G82165">
    <property type="entry name" value="G82165"/>
</dbReference>
<dbReference type="RefSeq" id="NP_231363.1">
    <property type="nucleotide sequence ID" value="NC_002505.1"/>
</dbReference>
<dbReference type="SMR" id="Q9KRB5"/>
<dbReference type="STRING" id="243277.VC_1727"/>
<dbReference type="DNASU" id="2613732"/>
<dbReference type="EnsemblBacteria" id="AAF94877">
    <property type="protein sequence ID" value="AAF94877"/>
    <property type="gene ID" value="VC_1727"/>
</dbReference>
<dbReference type="KEGG" id="vch:VC_1727"/>
<dbReference type="PATRIC" id="fig|243277.26.peg.1653"/>
<dbReference type="eggNOG" id="COG0448">
    <property type="taxonomic scope" value="Bacteria"/>
</dbReference>
<dbReference type="HOGENOM" id="CLU_029499_14_1_6"/>
<dbReference type="UniPathway" id="UPA00164"/>
<dbReference type="Proteomes" id="UP000000584">
    <property type="component" value="Chromosome 1"/>
</dbReference>
<dbReference type="GO" id="GO:0005524">
    <property type="term" value="F:ATP binding"/>
    <property type="evidence" value="ECO:0007669"/>
    <property type="project" value="UniProtKB-KW"/>
</dbReference>
<dbReference type="GO" id="GO:0008878">
    <property type="term" value="F:glucose-1-phosphate adenylyltransferase activity"/>
    <property type="evidence" value="ECO:0007669"/>
    <property type="project" value="UniProtKB-UniRule"/>
</dbReference>
<dbReference type="GO" id="GO:0005978">
    <property type="term" value="P:glycogen biosynthetic process"/>
    <property type="evidence" value="ECO:0007669"/>
    <property type="project" value="UniProtKB-UniRule"/>
</dbReference>
<dbReference type="CDD" id="cd02508">
    <property type="entry name" value="ADP_Glucose_PP"/>
    <property type="match status" value="1"/>
</dbReference>
<dbReference type="CDD" id="cd04651">
    <property type="entry name" value="LbH_G1P_AT_C"/>
    <property type="match status" value="1"/>
</dbReference>
<dbReference type="Gene3D" id="2.160.10.10">
    <property type="entry name" value="Hexapeptide repeat proteins"/>
    <property type="match status" value="1"/>
</dbReference>
<dbReference type="Gene3D" id="3.90.550.10">
    <property type="entry name" value="Spore Coat Polysaccharide Biosynthesis Protein SpsA, Chain A"/>
    <property type="match status" value="1"/>
</dbReference>
<dbReference type="HAMAP" id="MF_00624">
    <property type="entry name" value="GlgC"/>
    <property type="match status" value="1"/>
</dbReference>
<dbReference type="InterPro" id="IPR011831">
    <property type="entry name" value="ADP-Glc_PPase"/>
</dbReference>
<dbReference type="InterPro" id="IPR005836">
    <property type="entry name" value="ADP_Glu_pyroP_CS"/>
</dbReference>
<dbReference type="InterPro" id="IPR023049">
    <property type="entry name" value="GlgC_bac"/>
</dbReference>
<dbReference type="InterPro" id="IPR056818">
    <property type="entry name" value="GlmU/GlgC-like_hexapep"/>
</dbReference>
<dbReference type="InterPro" id="IPR005835">
    <property type="entry name" value="NTP_transferase_dom"/>
</dbReference>
<dbReference type="InterPro" id="IPR029044">
    <property type="entry name" value="Nucleotide-diphossugar_trans"/>
</dbReference>
<dbReference type="InterPro" id="IPR011004">
    <property type="entry name" value="Trimer_LpxA-like_sf"/>
</dbReference>
<dbReference type="NCBIfam" id="TIGR02091">
    <property type="entry name" value="glgC"/>
    <property type="match status" value="1"/>
</dbReference>
<dbReference type="NCBIfam" id="NF001947">
    <property type="entry name" value="PRK00725.1"/>
    <property type="match status" value="1"/>
</dbReference>
<dbReference type="NCBIfam" id="NF002023">
    <property type="entry name" value="PRK00844.1"/>
    <property type="match status" value="1"/>
</dbReference>
<dbReference type="PANTHER" id="PTHR43523:SF2">
    <property type="entry name" value="GLUCOSE-1-PHOSPHATE ADENYLYLTRANSFERASE"/>
    <property type="match status" value="1"/>
</dbReference>
<dbReference type="PANTHER" id="PTHR43523">
    <property type="entry name" value="GLUCOSE-1-PHOSPHATE ADENYLYLTRANSFERASE-RELATED"/>
    <property type="match status" value="1"/>
</dbReference>
<dbReference type="Pfam" id="PF24894">
    <property type="entry name" value="Hexapep_GlmU"/>
    <property type="match status" value="1"/>
</dbReference>
<dbReference type="Pfam" id="PF00483">
    <property type="entry name" value="NTP_transferase"/>
    <property type="match status" value="1"/>
</dbReference>
<dbReference type="SUPFAM" id="SSF53448">
    <property type="entry name" value="Nucleotide-diphospho-sugar transferases"/>
    <property type="match status" value="1"/>
</dbReference>
<dbReference type="SUPFAM" id="SSF51161">
    <property type="entry name" value="Trimeric LpxA-like enzymes"/>
    <property type="match status" value="1"/>
</dbReference>
<dbReference type="PROSITE" id="PS00808">
    <property type="entry name" value="ADP_GLC_PYROPHOSPH_1"/>
    <property type="match status" value="1"/>
</dbReference>
<dbReference type="PROSITE" id="PS00809">
    <property type="entry name" value="ADP_GLC_PYROPHOSPH_2"/>
    <property type="match status" value="1"/>
</dbReference>
<dbReference type="PROSITE" id="PS00810">
    <property type="entry name" value="ADP_GLC_PYROPHOSPH_3"/>
    <property type="match status" value="1"/>
</dbReference>
<reference key="1">
    <citation type="journal article" date="2000" name="Nature">
        <title>DNA sequence of both chromosomes of the cholera pathogen Vibrio cholerae.</title>
        <authorList>
            <person name="Heidelberg J.F."/>
            <person name="Eisen J.A."/>
            <person name="Nelson W.C."/>
            <person name="Clayton R.A."/>
            <person name="Gwinn M.L."/>
            <person name="Dodson R.J."/>
            <person name="Haft D.H."/>
            <person name="Hickey E.K."/>
            <person name="Peterson J.D."/>
            <person name="Umayam L.A."/>
            <person name="Gill S.R."/>
            <person name="Nelson K.E."/>
            <person name="Read T.D."/>
            <person name="Tettelin H."/>
            <person name="Richardson D.L."/>
            <person name="Ermolaeva M.D."/>
            <person name="Vamathevan J.J."/>
            <person name="Bass S."/>
            <person name="Qin H."/>
            <person name="Dragoi I."/>
            <person name="Sellers P."/>
            <person name="McDonald L.A."/>
            <person name="Utterback T.R."/>
            <person name="Fleischmann R.D."/>
            <person name="Nierman W.C."/>
            <person name="White O."/>
            <person name="Salzberg S.L."/>
            <person name="Smith H.O."/>
            <person name="Colwell R.R."/>
            <person name="Mekalanos J.J."/>
            <person name="Venter J.C."/>
            <person name="Fraser C.M."/>
        </authorList>
    </citation>
    <scope>NUCLEOTIDE SEQUENCE [LARGE SCALE GENOMIC DNA]</scope>
    <source>
        <strain>ATCC 39315 / El Tor Inaba N16961</strain>
    </source>
</reference>
<proteinExistence type="inferred from homology"/>
<organism>
    <name type="scientific">Vibrio cholerae serotype O1 (strain ATCC 39315 / El Tor Inaba N16961)</name>
    <dbReference type="NCBI Taxonomy" id="243277"/>
    <lineage>
        <taxon>Bacteria</taxon>
        <taxon>Pseudomonadati</taxon>
        <taxon>Pseudomonadota</taxon>
        <taxon>Gammaproteobacteria</taxon>
        <taxon>Vibrionales</taxon>
        <taxon>Vibrionaceae</taxon>
        <taxon>Vibrio</taxon>
    </lineage>
</organism>
<accession>Q9KRB5</accession>